<organism>
    <name type="scientific">Thermoplasma acidophilum (strain ATCC 25905 / DSM 1728 / JCM 9062 / NBRC 15155 / AMRC-C165)</name>
    <dbReference type="NCBI Taxonomy" id="273075"/>
    <lineage>
        <taxon>Archaea</taxon>
        <taxon>Methanobacteriati</taxon>
        <taxon>Thermoplasmatota</taxon>
        <taxon>Thermoplasmata</taxon>
        <taxon>Thermoplasmatales</taxon>
        <taxon>Thermoplasmataceae</taxon>
        <taxon>Thermoplasma</taxon>
    </lineage>
</organism>
<reference key="1">
    <citation type="journal article" date="2000" name="Nature">
        <title>The genome sequence of the thermoacidophilic scavenger Thermoplasma acidophilum.</title>
        <authorList>
            <person name="Ruepp A."/>
            <person name="Graml W."/>
            <person name="Santos-Martinez M.-L."/>
            <person name="Koretke K.K."/>
            <person name="Volker C."/>
            <person name="Mewes H.-W."/>
            <person name="Frishman D."/>
            <person name="Stocker S."/>
            <person name="Lupas A.N."/>
            <person name="Baumeister W."/>
        </authorList>
    </citation>
    <scope>NUCLEOTIDE SEQUENCE [LARGE SCALE GENOMIC DNA]</scope>
    <source>
        <strain>ATCC 25905 / DSM 1728 / JCM 9062 / NBRC 15155 / AMRC-C165</strain>
    </source>
</reference>
<sequence>MKIIAKGKVKDVYDDGDTLVFRFSNRISVFDKIIPTEIENKGESLCRTSSFWFRYIGERGIKNHFIEMIDNRTMRVRKYDVPEKVSPGSSGYVIPLEFITRHYVAGSLYDRLKAGSTKPADIGLNHFPDYGEKLPSPVFEVTTKREKTDRLLDIDEALEISGLTREEYAEIRETILKIDEMMEQEVGKRGLIHADGKKEVALGKEREPIIVDTFGTADEDRFWEKKEYDAGRIVELSKEMVRQYYRSTGYHDRLYEARSRGMPEPDIPPLPEDMARKVSDLYKTMYERITGQKW</sequence>
<gene>
    <name evidence="1" type="primary">purC</name>
    <name type="ordered locus">Ta0309</name>
</gene>
<dbReference type="EC" id="6.3.2.6" evidence="1"/>
<dbReference type="EMBL" id="AL445063">
    <property type="protein sequence ID" value="CAC11454.1"/>
    <property type="status" value="ALT_INIT"/>
    <property type="molecule type" value="Genomic_DNA"/>
</dbReference>
<dbReference type="RefSeq" id="WP_048161525.1">
    <property type="nucleotide sequence ID" value="NC_002578.1"/>
</dbReference>
<dbReference type="SMR" id="Q9HLC0"/>
<dbReference type="FunCoup" id="Q9HLC0">
    <property type="interactions" value="193"/>
</dbReference>
<dbReference type="STRING" id="273075.gene:9571526"/>
<dbReference type="PaxDb" id="273075-Ta0309"/>
<dbReference type="EnsemblBacteria" id="CAC11454">
    <property type="protein sequence ID" value="CAC11454"/>
    <property type="gene ID" value="CAC11454"/>
</dbReference>
<dbReference type="KEGG" id="tac:Ta0309"/>
<dbReference type="eggNOG" id="arCOG04421">
    <property type="taxonomic scope" value="Archaea"/>
</dbReference>
<dbReference type="HOGENOM" id="CLU_045637_0_1_2"/>
<dbReference type="InParanoid" id="Q9HLC0"/>
<dbReference type="OrthoDB" id="10775at2157"/>
<dbReference type="UniPathway" id="UPA00074">
    <property type="reaction ID" value="UER00131"/>
</dbReference>
<dbReference type="Proteomes" id="UP000001024">
    <property type="component" value="Chromosome"/>
</dbReference>
<dbReference type="GO" id="GO:0005737">
    <property type="term" value="C:cytoplasm"/>
    <property type="evidence" value="ECO:0007669"/>
    <property type="project" value="TreeGrafter"/>
</dbReference>
<dbReference type="GO" id="GO:0005524">
    <property type="term" value="F:ATP binding"/>
    <property type="evidence" value="ECO:0007669"/>
    <property type="project" value="UniProtKB-KW"/>
</dbReference>
<dbReference type="GO" id="GO:0004639">
    <property type="term" value="F:phosphoribosylaminoimidazolesuccinocarboxamide synthase activity"/>
    <property type="evidence" value="ECO:0007669"/>
    <property type="project" value="UniProtKB-UniRule"/>
</dbReference>
<dbReference type="GO" id="GO:0006189">
    <property type="term" value="P:'de novo' IMP biosynthetic process"/>
    <property type="evidence" value="ECO:0007669"/>
    <property type="project" value="UniProtKB-UniRule"/>
</dbReference>
<dbReference type="CDD" id="cd01414">
    <property type="entry name" value="SAICAR_synt_Sc"/>
    <property type="match status" value="1"/>
</dbReference>
<dbReference type="Gene3D" id="3.30.470.20">
    <property type="entry name" value="ATP-grasp fold, B domain"/>
    <property type="match status" value="1"/>
</dbReference>
<dbReference type="Gene3D" id="3.30.200.20">
    <property type="entry name" value="Phosphorylase Kinase, domain 1"/>
    <property type="match status" value="1"/>
</dbReference>
<dbReference type="HAMAP" id="MF_00137">
    <property type="entry name" value="SAICAR_synth"/>
    <property type="match status" value="1"/>
</dbReference>
<dbReference type="InterPro" id="IPR028923">
    <property type="entry name" value="SAICAR_synt/ADE2_N"/>
</dbReference>
<dbReference type="InterPro" id="IPR001636">
    <property type="entry name" value="SAICAR_synth"/>
</dbReference>
<dbReference type="InterPro" id="IPR018236">
    <property type="entry name" value="SAICAR_synthetase_CS"/>
</dbReference>
<dbReference type="NCBIfam" id="NF010564">
    <property type="entry name" value="PRK13959.1-1"/>
    <property type="match status" value="1"/>
</dbReference>
<dbReference type="NCBIfam" id="TIGR00081">
    <property type="entry name" value="purC"/>
    <property type="match status" value="1"/>
</dbReference>
<dbReference type="PANTHER" id="PTHR43700">
    <property type="entry name" value="PHOSPHORIBOSYLAMINOIMIDAZOLE-SUCCINOCARBOXAMIDE SYNTHASE"/>
    <property type="match status" value="1"/>
</dbReference>
<dbReference type="PANTHER" id="PTHR43700:SF1">
    <property type="entry name" value="PHOSPHORIBOSYLAMINOIMIDAZOLE-SUCCINOCARBOXAMIDE SYNTHASE"/>
    <property type="match status" value="1"/>
</dbReference>
<dbReference type="Pfam" id="PF01259">
    <property type="entry name" value="SAICAR_synt"/>
    <property type="match status" value="1"/>
</dbReference>
<dbReference type="SUPFAM" id="SSF56104">
    <property type="entry name" value="SAICAR synthase-like"/>
    <property type="match status" value="1"/>
</dbReference>
<dbReference type="PROSITE" id="PS01057">
    <property type="entry name" value="SAICAR_SYNTHETASE_1"/>
    <property type="match status" value="1"/>
</dbReference>
<proteinExistence type="inferred from homology"/>
<accession>Q9HLC0</accession>
<comment type="catalytic activity">
    <reaction evidence="1">
        <text>5-amino-1-(5-phospho-D-ribosyl)imidazole-4-carboxylate + L-aspartate + ATP = (2S)-2-[5-amino-1-(5-phospho-beta-D-ribosyl)imidazole-4-carboxamido]succinate + ADP + phosphate + 2 H(+)</text>
        <dbReference type="Rhea" id="RHEA:22628"/>
        <dbReference type="ChEBI" id="CHEBI:15378"/>
        <dbReference type="ChEBI" id="CHEBI:29991"/>
        <dbReference type="ChEBI" id="CHEBI:30616"/>
        <dbReference type="ChEBI" id="CHEBI:43474"/>
        <dbReference type="ChEBI" id="CHEBI:58443"/>
        <dbReference type="ChEBI" id="CHEBI:77657"/>
        <dbReference type="ChEBI" id="CHEBI:456216"/>
        <dbReference type="EC" id="6.3.2.6"/>
    </reaction>
</comment>
<comment type="pathway">
    <text evidence="1">Purine metabolism; IMP biosynthesis via de novo pathway; 5-amino-1-(5-phospho-D-ribosyl)imidazole-4-carboxamide from 5-amino-1-(5-phospho-D-ribosyl)imidazole-4-carboxylate: step 1/2.</text>
</comment>
<comment type="similarity">
    <text evidence="1">Belongs to the SAICAR synthetase family.</text>
</comment>
<comment type="sequence caution" evidence="2">
    <conflict type="erroneous initiation">
        <sequence resource="EMBL-CDS" id="CAC11454"/>
    </conflict>
</comment>
<evidence type="ECO:0000255" key="1">
    <source>
        <dbReference type="HAMAP-Rule" id="MF_00137"/>
    </source>
</evidence>
<evidence type="ECO:0000305" key="2"/>
<protein>
    <recommendedName>
        <fullName evidence="1">Phosphoribosylaminoimidazole-succinocarboxamide synthase</fullName>
        <ecNumber evidence="1">6.3.2.6</ecNumber>
    </recommendedName>
    <alternativeName>
        <fullName evidence="1">SAICAR synthetase</fullName>
    </alternativeName>
</protein>
<feature type="chain" id="PRO_0000100921" description="Phosphoribosylaminoimidazole-succinocarboxamide synthase">
    <location>
        <begin position="1"/>
        <end position="294"/>
    </location>
</feature>
<name>PUR7_THEAC</name>
<keyword id="KW-0067">ATP-binding</keyword>
<keyword id="KW-0436">Ligase</keyword>
<keyword id="KW-0547">Nucleotide-binding</keyword>
<keyword id="KW-0658">Purine biosynthesis</keyword>
<keyword id="KW-1185">Reference proteome</keyword>